<proteinExistence type="inferred from homology"/>
<organism>
    <name type="scientific">Blochmanniella pennsylvanica (strain BPEN)</name>
    <dbReference type="NCBI Taxonomy" id="291272"/>
    <lineage>
        <taxon>Bacteria</taxon>
        <taxon>Pseudomonadati</taxon>
        <taxon>Pseudomonadota</taxon>
        <taxon>Gammaproteobacteria</taxon>
        <taxon>Enterobacterales</taxon>
        <taxon>Enterobacteriaceae</taxon>
        <taxon>ant endosymbionts</taxon>
        <taxon>Candidatus Blochmanniella</taxon>
    </lineage>
</organism>
<protein>
    <recommendedName>
        <fullName evidence="1">Large ribosomal subunit protein uL15</fullName>
    </recommendedName>
    <alternativeName>
        <fullName evidence="3">50S ribosomal protein L15</fullName>
    </alternativeName>
</protein>
<evidence type="ECO:0000255" key="1">
    <source>
        <dbReference type="HAMAP-Rule" id="MF_01341"/>
    </source>
</evidence>
<evidence type="ECO:0000256" key="2">
    <source>
        <dbReference type="SAM" id="MobiDB-lite"/>
    </source>
</evidence>
<evidence type="ECO:0000305" key="3"/>
<feature type="chain" id="PRO_0000104683" description="Large ribosomal subunit protein uL15">
    <location>
        <begin position="1"/>
        <end position="144"/>
    </location>
</feature>
<feature type="region of interest" description="Disordered" evidence="2">
    <location>
        <begin position="1"/>
        <end position="51"/>
    </location>
</feature>
<feature type="compositionally biased region" description="Polar residues" evidence="2">
    <location>
        <begin position="1"/>
        <end position="10"/>
    </location>
</feature>
<feature type="compositionally biased region" description="Basic residues" evidence="2">
    <location>
        <begin position="11"/>
        <end position="20"/>
    </location>
</feature>
<feature type="compositionally biased region" description="Gly residues" evidence="2">
    <location>
        <begin position="21"/>
        <end position="31"/>
    </location>
</feature>
<feature type="compositionally biased region" description="Basic residues" evidence="2">
    <location>
        <begin position="32"/>
        <end position="44"/>
    </location>
</feature>
<comment type="function">
    <text evidence="1">Binds to the 23S rRNA.</text>
</comment>
<comment type="subunit">
    <text evidence="1">Part of the 50S ribosomal subunit.</text>
</comment>
<comment type="similarity">
    <text evidence="1">Belongs to the universal ribosomal protein uL15 family.</text>
</comment>
<keyword id="KW-1185">Reference proteome</keyword>
<keyword id="KW-0687">Ribonucleoprotein</keyword>
<keyword id="KW-0689">Ribosomal protein</keyword>
<keyword id="KW-0694">RNA-binding</keyword>
<keyword id="KW-0699">rRNA-binding</keyword>
<reference key="1">
    <citation type="journal article" date="2005" name="Genome Res.">
        <title>Genome sequence of Blochmannia pennsylvanicus indicates parallel evolutionary trends among bacterial mutualists of insects.</title>
        <authorList>
            <person name="Degnan P.H."/>
            <person name="Lazarus A.B."/>
            <person name="Wernegreen J.J."/>
        </authorList>
    </citation>
    <scope>NUCLEOTIDE SEQUENCE [LARGE SCALE GENOMIC DNA]</scope>
    <source>
        <strain>BPEN</strain>
    </source>
</reference>
<accession>Q493J0</accession>
<dbReference type="EMBL" id="CP000016">
    <property type="protein sequence ID" value="AAZ40850.1"/>
    <property type="molecule type" value="Genomic_DNA"/>
</dbReference>
<dbReference type="RefSeq" id="WP_011282757.1">
    <property type="nucleotide sequence ID" value="NC_007292.1"/>
</dbReference>
<dbReference type="SMR" id="Q493J0"/>
<dbReference type="STRING" id="291272.BPEN_217"/>
<dbReference type="KEGG" id="bpn:BPEN_217"/>
<dbReference type="eggNOG" id="COG0200">
    <property type="taxonomic scope" value="Bacteria"/>
</dbReference>
<dbReference type="HOGENOM" id="CLU_055188_4_2_6"/>
<dbReference type="OrthoDB" id="9810293at2"/>
<dbReference type="Proteomes" id="UP000007794">
    <property type="component" value="Chromosome"/>
</dbReference>
<dbReference type="GO" id="GO:0022625">
    <property type="term" value="C:cytosolic large ribosomal subunit"/>
    <property type="evidence" value="ECO:0007669"/>
    <property type="project" value="TreeGrafter"/>
</dbReference>
<dbReference type="GO" id="GO:0019843">
    <property type="term" value="F:rRNA binding"/>
    <property type="evidence" value="ECO:0007669"/>
    <property type="project" value="UniProtKB-UniRule"/>
</dbReference>
<dbReference type="GO" id="GO:0003735">
    <property type="term" value="F:structural constituent of ribosome"/>
    <property type="evidence" value="ECO:0007669"/>
    <property type="project" value="InterPro"/>
</dbReference>
<dbReference type="GO" id="GO:0006412">
    <property type="term" value="P:translation"/>
    <property type="evidence" value="ECO:0007669"/>
    <property type="project" value="UniProtKB-UniRule"/>
</dbReference>
<dbReference type="Gene3D" id="3.100.10.10">
    <property type="match status" value="1"/>
</dbReference>
<dbReference type="HAMAP" id="MF_01341">
    <property type="entry name" value="Ribosomal_uL15"/>
    <property type="match status" value="1"/>
</dbReference>
<dbReference type="InterPro" id="IPR030878">
    <property type="entry name" value="Ribosomal_uL15"/>
</dbReference>
<dbReference type="InterPro" id="IPR021131">
    <property type="entry name" value="Ribosomal_uL15/eL18"/>
</dbReference>
<dbReference type="InterPro" id="IPR036227">
    <property type="entry name" value="Ribosomal_uL15/eL18_sf"/>
</dbReference>
<dbReference type="InterPro" id="IPR005749">
    <property type="entry name" value="Ribosomal_uL15_bac-type"/>
</dbReference>
<dbReference type="NCBIfam" id="TIGR01071">
    <property type="entry name" value="rplO_bact"/>
    <property type="match status" value="1"/>
</dbReference>
<dbReference type="PANTHER" id="PTHR12934">
    <property type="entry name" value="50S RIBOSOMAL PROTEIN L15"/>
    <property type="match status" value="1"/>
</dbReference>
<dbReference type="PANTHER" id="PTHR12934:SF11">
    <property type="entry name" value="LARGE RIBOSOMAL SUBUNIT PROTEIN UL15M"/>
    <property type="match status" value="1"/>
</dbReference>
<dbReference type="Pfam" id="PF00828">
    <property type="entry name" value="Ribosomal_L27A"/>
    <property type="match status" value="1"/>
</dbReference>
<dbReference type="SUPFAM" id="SSF52080">
    <property type="entry name" value="Ribosomal proteins L15p and L18e"/>
    <property type="match status" value="1"/>
</dbReference>
<name>RL15_BLOPB</name>
<sequence length="144" mass="15863">MYLNTISPSRGSKHLSKRVGRGIGSGLGKTGGRGHKGQKSRSGGKVRLGFEGGQTPLYRRLPKFGFISRKAMVTQEIRLSDLSRVSDKVIDLNVLKTYNIISRKIKFVKIIMSGEIKRPITIRKLRVSKGARAAIQSIGGQIEE</sequence>
<gene>
    <name evidence="1" type="primary">rplO</name>
    <name type="ordered locus">BPEN_217</name>
</gene>